<organism>
    <name type="scientific">Mustela putorius furo</name>
    <name type="common">European domestic ferret</name>
    <name type="synonym">Mustela furo</name>
    <dbReference type="NCBI Taxonomy" id="9669"/>
    <lineage>
        <taxon>Eukaryota</taxon>
        <taxon>Metazoa</taxon>
        <taxon>Chordata</taxon>
        <taxon>Craniata</taxon>
        <taxon>Vertebrata</taxon>
        <taxon>Euteleostomi</taxon>
        <taxon>Mammalia</taxon>
        <taxon>Eutheria</taxon>
        <taxon>Laurasiatheria</taxon>
        <taxon>Carnivora</taxon>
        <taxon>Caniformia</taxon>
        <taxon>Musteloidea</taxon>
        <taxon>Mustelidae</taxon>
        <taxon>Mustelinae</taxon>
        <taxon>Mustela</taxon>
    </lineage>
</organism>
<name>IFNG_MUSPF</name>
<evidence type="ECO:0000250" key="1"/>
<evidence type="ECO:0000250" key="2">
    <source>
        <dbReference type="UniProtKB" id="P01579"/>
    </source>
</evidence>
<evidence type="ECO:0000250" key="3">
    <source>
        <dbReference type="UniProtKB" id="P01580"/>
    </source>
</evidence>
<evidence type="ECO:0000255" key="4"/>
<evidence type="ECO:0000305" key="5"/>
<feature type="signal peptide" evidence="1">
    <location>
        <begin position="1"/>
        <end position="23"/>
    </location>
</feature>
<feature type="chain" id="PRO_5000235046" description="Interferon gamma">
    <location>
        <begin position="24"/>
        <end position="166"/>
    </location>
</feature>
<feature type="modified residue" description="Pyrrolidone carboxylic acid" evidence="2">
    <location>
        <position position="24"/>
    </location>
</feature>
<feature type="glycosylation site" description="N-linked (GlcNAc...) asparagine" evidence="4">
    <location>
        <position position="39"/>
    </location>
</feature>
<feature type="glycosylation site" description="N-linked (GlcNAc...) asparagine" evidence="4">
    <location>
        <position position="106"/>
    </location>
</feature>
<feature type="glycosylation site" description="N-linked (GlcNAc...) asparagine" evidence="4">
    <location>
        <position position="107"/>
    </location>
</feature>
<comment type="function">
    <text evidence="2 3">Type II interferon produced by immune cells such as T-cells and NK cells that plays crucial roles in antimicrobial, antiviral, and antitumor responses by activating effector immune cells and enhancing antigen presentation. Primarily signals through the JAK-STAT pathway after interaction with its receptor IFNGR1 to affect gene regulation. Upon IFNG binding, IFNGR1 intracellular domain opens out to allow association of downstream signaling components JAK2, JAK1 and STAT1, leading to STAT1 activation, nuclear translocation and transcription of IFNG-regulated genes. Many of the induced genes are transcription factors such as IRF1 that are able to further drive regulation of a next wave of transcription. Plays a role in class I antigen presentation pathway by inducing a replacement of catalytic proteasome subunits with immunoproteasome subunits. In turn, increases the quantity, quality, and repertoire of peptides for class I MHC loading. Increases the efficiency of peptide generation also by inducing the expression of activator PA28 that associates with the proteasome and alters its proteolytic cleavage preference. Up-regulates as well MHC II complexes on the cell surface by promoting expression of several key molecules such as cathepsins B/CTSB, H/CTSH, and L/CTSL (By similarity). Participates in the regulation of hematopoietic stem cells during development and under homeostatic conditions by affecting their development, quiescence, and differentiation (By similarity).</text>
</comment>
<comment type="subunit">
    <text evidence="2">Homodimer. Interacts with IFNGR1 (via extracellular domain); this interaction promotes IFNGR1 dimerization.</text>
</comment>
<comment type="subcellular location">
    <subcellularLocation>
        <location evidence="2">Secreted</location>
    </subcellularLocation>
</comment>
<comment type="similarity">
    <text evidence="5">Belongs to the type II (or gamma) interferon family.</text>
</comment>
<reference key="1">
    <citation type="submission" date="2007-04" db="EMBL/GenBank/DDBJ databases">
        <title>Mustela putorius furo interferon-gamma.</title>
        <authorList>
            <person name="Nakata M."/>
            <person name="Itou T."/>
            <person name="Sakai T."/>
        </authorList>
    </citation>
    <scope>NUCLEOTIDE SEQUENCE [MRNA]</scope>
</reference>
<keyword id="KW-0051">Antiviral defense</keyword>
<keyword id="KW-0202">Cytokine</keyword>
<keyword id="KW-0325">Glycoprotein</keyword>
<keyword id="KW-0341">Growth regulation</keyword>
<keyword id="KW-0873">Pyrrolidone carboxylic acid</keyword>
<keyword id="KW-1185">Reference proteome</keyword>
<keyword id="KW-0964">Secreted</keyword>
<keyword id="KW-0732">Signal</keyword>
<dbReference type="EMBL" id="AB300566">
    <property type="protein sequence ID" value="BAF56574.1"/>
    <property type="molecule type" value="mRNA"/>
</dbReference>
<dbReference type="SMR" id="A4PIZ9"/>
<dbReference type="FunCoup" id="A4PIZ9">
    <property type="interactions" value="53"/>
</dbReference>
<dbReference type="STRING" id="9669.ENSMPUP00000017401"/>
<dbReference type="GlyCosmos" id="A4PIZ9">
    <property type="glycosylation" value="3 sites, No reported glycans"/>
</dbReference>
<dbReference type="eggNOG" id="ENOG502SBGW">
    <property type="taxonomic scope" value="Eukaryota"/>
</dbReference>
<dbReference type="InParanoid" id="A4PIZ9"/>
<dbReference type="Proteomes" id="UP000000715">
    <property type="component" value="Unplaced"/>
</dbReference>
<dbReference type="GO" id="GO:0005615">
    <property type="term" value="C:extracellular space"/>
    <property type="evidence" value="ECO:0007669"/>
    <property type="project" value="UniProtKB-KW"/>
</dbReference>
<dbReference type="GO" id="GO:0005125">
    <property type="term" value="F:cytokine activity"/>
    <property type="evidence" value="ECO:0007669"/>
    <property type="project" value="UniProtKB-KW"/>
</dbReference>
<dbReference type="GO" id="GO:0005133">
    <property type="term" value="F:type II interferon receptor binding"/>
    <property type="evidence" value="ECO:0007669"/>
    <property type="project" value="InterPro"/>
</dbReference>
<dbReference type="GO" id="GO:0002250">
    <property type="term" value="P:adaptive immune response"/>
    <property type="evidence" value="ECO:0007669"/>
    <property type="project" value="TreeGrafter"/>
</dbReference>
<dbReference type="GO" id="GO:0051607">
    <property type="term" value="P:defense response to virus"/>
    <property type="evidence" value="ECO:0007669"/>
    <property type="project" value="UniProtKB-KW"/>
</dbReference>
<dbReference type="GO" id="GO:0006959">
    <property type="term" value="P:humoral immune response"/>
    <property type="evidence" value="ECO:0007669"/>
    <property type="project" value="TreeGrafter"/>
</dbReference>
<dbReference type="GO" id="GO:0010508">
    <property type="term" value="P:positive regulation of autophagy"/>
    <property type="evidence" value="ECO:0000250"/>
    <property type="project" value="UniProtKB"/>
</dbReference>
<dbReference type="FunFam" id="1.20.1250.10:FF:000007">
    <property type="entry name" value="Interferon gamma"/>
    <property type="match status" value="1"/>
</dbReference>
<dbReference type="Gene3D" id="1.20.1250.10">
    <property type="match status" value="1"/>
</dbReference>
<dbReference type="InterPro" id="IPR009079">
    <property type="entry name" value="4_helix_cytokine-like_core"/>
</dbReference>
<dbReference type="InterPro" id="IPR002069">
    <property type="entry name" value="Interferon_gamma"/>
</dbReference>
<dbReference type="PANTHER" id="PTHR11419">
    <property type="entry name" value="INTERFERON GAMMA"/>
    <property type="match status" value="1"/>
</dbReference>
<dbReference type="PANTHER" id="PTHR11419:SF0">
    <property type="entry name" value="INTERFERON GAMMA"/>
    <property type="match status" value="1"/>
</dbReference>
<dbReference type="Pfam" id="PF00714">
    <property type="entry name" value="IFN-gamma"/>
    <property type="match status" value="1"/>
</dbReference>
<dbReference type="PIRSF" id="PIRSF001936">
    <property type="entry name" value="IFN-gamma"/>
    <property type="match status" value="1"/>
</dbReference>
<dbReference type="SUPFAM" id="SSF47266">
    <property type="entry name" value="4-helical cytokines"/>
    <property type="match status" value="1"/>
</dbReference>
<accession>A4PIZ9</accession>
<sequence length="166" mass="19613">MNYTTICLAFQLCVIFCSSGYYCQAMFFKEIEDLKEYFNASNPDVADGGPLFLDILKNWREESDKKIIQSQIVSFYLKLFENFKDNQIIQRSMDTIKEDMLVRFFNNSSSKLEDFLKLIRIPVNDLQVQRKAINELIKVMNDLSPRSNLRKRKRSHSLFRGRRASK</sequence>
<gene>
    <name type="primary">IFNG</name>
</gene>
<proteinExistence type="evidence at transcript level"/>
<protein>
    <recommendedName>
        <fullName>Interferon gamma</fullName>
        <shortName>IFN-gamma</shortName>
    </recommendedName>
</protein>